<feature type="chain" id="PRO_0000119332" description="Transcription initiation factor IIB">
    <location>
        <begin position="1"/>
        <end position="300"/>
    </location>
</feature>
<feature type="repeat" description="1">
    <location>
        <begin position="114"/>
        <end position="197"/>
    </location>
</feature>
<feature type="repeat" description="2">
    <location>
        <begin position="210"/>
        <end position="291"/>
    </location>
</feature>
<feature type="zinc finger region" description="TFIIB-type" evidence="2">
    <location>
        <begin position="2"/>
        <end position="34"/>
    </location>
</feature>
<feature type="binding site" evidence="2">
    <location>
        <position position="7"/>
    </location>
    <ligand>
        <name>Zn(2+)</name>
        <dbReference type="ChEBI" id="CHEBI:29105"/>
    </ligand>
</feature>
<feature type="binding site" evidence="2">
    <location>
        <position position="10"/>
    </location>
    <ligand>
        <name>Zn(2+)</name>
        <dbReference type="ChEBI" id="CHEBI:29105"/>
    </ligand>
</feature>
<feature type="binding site" evidence="2">
    <location>
        <position position="26"/>
    </location>
    <ligand>
        <name>Zn(2+)</name>
        <dbReference type="ChEBI" id="CHEBI:29105"/>
    </ligand>
</feature>
<feature type="binding site" evidence="2">
    <location>
        <position position="29"/>
    </location>
    <ligand>
        <name>Zn(2+)</name>
        <dbReference type="ChEBI" id="CHEBI:29105"/>
    </ligand>
</feature>
<feature type="helix" evidence="4">
    <location>
        <begin position="109"/>
        <end position="123"/>
    </location>
</feature>
<feature type="helix" evidence="4">
    <location>
        <begin position="127"/>
        <end position="141"/>
    </location>
</feature>
<feature type="turn" evidence="4">
    <location>
        <begin position="142"/>
        <end position="148"/>
    </location>
</feature>
<feature type="helix" evidence="4">
    <location>
        <begin position="151"/>
        <end position="166"/>
    </location>
</feature>
<feature type="helix" evidence="4">
    <location>
        <begin position="172"/>
        <end position="178"/>
    </location>
</feature>
<feature type="strand" evidence="5">
    <location>
        <begin position="179"/>
        <end position="181"/>
    </location>
</feature>
<feature type="helix" evidence="4">
    <location>
        <begin position="183"/>
        <end position="196"/>
    </location>
</feature>
<feature type="turn" evidence="4">
    <location>
        <begin position="201"/>
        <end position="204"/>
    </location>
</feature>
<feature type="helix" evidence="4">
    <location>
        <begin position="208"/>
        <end position="211"/>
    </location>
</feature>
<feature type="helix" evidence="4">
    <location>
        <begin position="212"/>
        <end position="219"/>
    </location>
</feature>
<feature type="helix" evidence="4">
    <location>
        <begin position="223"/>
        <end position="238"/>
    </location>
</feature>
<feature type="helix" evidence="4">
    <location>
        <begin position="247"/>
        <end position="261"/>
    </location>
</feature>
<feature type="helix" evidence="4">
    <location>
        <begin position="268"/>
        <end position="275"/>
    </location>
</feature>
<feature type="helix" evidence="4">
    <location>
        <begin position="279"/>
        <end position="293"/>
    </location>
</feature>
<organism>
    <name type="scientific">Pyrococcus woesei</name>
    <dbReference type="NCBI Taxonomy" id="2262"/>
    <lineage>
        <taxon>Archaea</taxon>
        <taxon>Methanobacteriati</taxon>
        <taxon>Methanobacteriota</taxon>
        <taxon>Thermococci</taxon>
        <taxon>Thermococcales</taxon>
        <taxon>Thermococcaceae</taxon>
        <taxon>Pyrococcus</taxon>
    </lineage>
</organism>
<protein>
    <recommendedName>
        <fullName evidence="1">Transcription initiation factor IIB</fullName>
        <shortName evidence="1">TFIIB</shortName>
    </recommendedName>
</protein>
<reference key="1">
    <citation type="journal article" date="1993" name="Nucleic Acids Res.">
        <title>Complete nucleotide sequence of an archaeal (Pyrococcus woesei) gene encoding a homolog of eukaryotic transcription factor IIB (TFIIB).</title>
        <authorList>
            <person name="Creti R."/>
            <person name="Londei P."/>
            <person name="Cammarano P."/>
        </authorList>
    </citation>
    <scope>NUCLEOTIDE SEQUENCE [GENOMIC DNA]</scope>
</reference>
<reference key="2">
    <citation type="journal article" date="1991" name="J. Mol. Evol.">
        <title>Nucleotide sequence of a DNA region comprising the gene for elongation factor 1 alpha (EF-1 alpha) from the ultrathermophilic archaeote Pyrococcus woesei: phylogenetic implications.</title>
        <authorList>
            <person name="Creti R."/>
            <person name="Citarella F."/>
            <person name="Tiboni O."/>
            <person name="Sanangelantoni A.M."/>
            <person name="Palm P."/>
            <person name="Cammarano P."/>
        </authorList>
    </citation>
    <scope>NUCLEOTIDE SEQUENCE [GENOMIC DNA] OF 149-300</scope>
</reference>
<reference key="3">
    <citation type="journal article" date="1992" name="Cell">
        <title>TFIIB, an evolutionary link between the transcription machineries of archaebacteria and eukaryotes.</title>
        <authorList>
            <person name="Ouzounis C."/>
            <person name="Sander C."/>
        </authorList>
    </citation>
    <scope>SIMILARITY TO EUKARYOTIC TFIIB</scope>
</reference>
<reference key="4">
    <citation type="journal article" date="1997" name="Proc. Natl. Acad. Sci. U.S.A.">
        <title>The 2.1-A crystal structure of an archaeal preinitiation complex: TATA-box-binding protein/transcription factor (II)B core/TATA-box.</title>
        <authorList>
            <person name="Kosa P.F."/>
            <person name="Ghosh G."/>
            <person name="DeDecker B.S."/>
            <person name="Sigler P.B."/>
        </authorList>
    </citation>
    <scope>X-RAY CRYSTALLOGRAPHY (2.1 ANGSTROMS) OF 101-300</scope>
</reference>
<gene>
    <name evidence="1" type="primary">tfb</name>
</gene>
<sequence>MNKQKVCPACESAELIYDPERGEIVCAKCGYVIEENIIDMGPEWRAFDASQRERRSRTGAPESILLHDKGLSTEIGIDRSLSGLMREKMYRLRKWQSRLRVSDAAERNLAFALSELDRITAQLKLPRHVEEEAARLYREAVRKGLIRGRSIESVMAACVYAACRLLKVPRTLDEIADIARVDKKEIGRSYRFIARNLNLTPKKLFVKPTDYVNKFADELGLSEKVRRRAIEILDEAYKRGLTSGKSPAGLVAAALYIASLLEGEKRTQREVAEVARVTEVTVRNRYKELVEKLKIKVPIA</sequence>
<evidence type="ECO:0000255" key="1">
    <source>
        <dbReference type="HAMAP-Rule" id="MF_00383"/>
    </source>
</evidence>
<evidence type="ECO:0000255" key="2">
    <source>
        <dbReference type="PROSITE-ProRule" id="PRU00469"/>
    </source>
</evidence>
<evidence type="ECO:0000305" key="3"/>
<evidence type="ECO:0007829" key="4">
    <source>
        <dbReference type="PDB" id="1AIS"/>
    </source>
</evidence>
<evidence type="ECO:0007829" key="5">
    <source>
        <dbReference type="PDB" id="1D3U"/>
    </source>
</evidence>
<keyword id="KW-0002">3D-structure</keyword>
<keyword id="KW-0479">Metal-binding</keyword>
<keyword id="KW-0677">Repeat</keyword>
<keyword id="KW-0804">Transcription</keyword>
<keyword id="KW-0805">Transcription regulation</keyword>
<keyword id="KW-0862">Zinc</keyword>
<keyword id="KW-0863">Zinc-finger</keyword>
<accession>P61999</accession>
<accession>P29095</accession>
<accession>Q51731</accession>
<comment type="function">
    <text>Stabilizes TBP binding to an archaeal box-A promoter. Also responsible for recruiting RNA polymerase II to the pre-initiation complex (DNA-TBP-TFIIB).</text>
</comment>
<comment type="similarity">
    <text evidence="1">Belongs to the TFIIB family.</text>
</comment>
<comment type="sequence caution" evidence="3">
    <conflict type="erroneous initiation">
        <sequence resource="EMBL-CDS" id="CAA50006"/>
    </conflict>
</comment>
<dbReference type="EMBL" id="X70668">
    <property type="protein sequence ID" value="CAA50006.1"/>
    <property type="status" value="ALT_INIT"/>
    <property type="molecule type" value="Genomic_DNA"/>
</dbReference>
<dbReference type="EMBL" id="X59857">
    <property type="status" value="NOT_ANNOTATED_CDS"/>
    <property type="molecule type" value="Genomic_DNA"/>
</dbReference>
<dbReference type="PIR" id="S34116">
    <property type="entry name" value="S34116"/>
</dbReference>
<dbReference type="PDB" id="1AIS">
    <property type="method" value="X-ray"/>
    <property type="resolution" value="2.10 A"/>
    <property type="chains" value="B=101-300"/>
</dbReference>
<dbReference type="PDB" id="1D3U">
    <property type="method" value="X-ray"/>
    <property type="resolution" value="2.40 A"/>
    <property type="chains" value="B=100-300"/>
</dbReference>
<dbReference type="PDBsum" id="1AIS"/>
<dbReference type="PDBsum" id="1D3U"/>
<dbReference type="SMR" id="P61999"/>
<dbReference type="EvolutionaryTrace" id="P61999"/>
<dbReference type="GO" id="GO:0097550">
    <property type="term" value="C:transcription preinitiation complex"/>
    <property type="evidence" value="ECO:0007669"/>
    <property type="project" value="TreeGrafter"/>
</dbReference>
<dbReference type="GO" id="GO:0003700">
    <property type="term" value="F:DNA-binding transcription factor activity"/>
    <property type="evidence" value="ECO:0007669"/>
    <property type="project" value="UniProtKB-UniRule"/>
</dbReference>
<dbReference type="GO" id="GO:0017025">
    <property type="term" value="F:TBP-class protein binding"/>
    <property type="evidence" value="ECO:0007669"/>
    <property type="project" value="InterPro"/>
</dbReference>
<dbReference type="GO" id="GO:0008270">
    <property type="term" value="F:zinc ion binding"/>
    <property type="evidence" value="ECO:0007669"/>
    <property type="project" value="UniProtKB-UniRule"/>
</dbReference>
<dbReference type="GO" id="GO:0070897">
    <property type="term" value="P:transcription preinitiation complex assembly"/>
    <property type="evidence" value="ECO:0007669"/>
    <property type="project" value="InterPro"/>
</dbReference>
<dbReference type="CDD" id="cd20549">
    <property type="entry name" value="CYCLIN_TFIIB_archaea_like_rpt1"/>
    <property type="match status" value="1"/>
</dbReference>
<dbReference type="CDD" id="cd20550">
    <property type="entry name" value="CYCLIN_TFIIB_archaea_like_rpt2"/>
    <property type="match status" value="1"/>
</dbReference>
<dbReference type="FunFam" id="1.10.472.10:FF:000023">
    <property type="entry name" value="Transcription initiation factor IIB"/>
    <property type="match status" value="1"/>
</dbReference>
<dbReference type="FunFam" id="1.10.472.170:FF:000001">
    <property type="entry name" value="Transcription initiation factor IIB"/>
    <property type="match status" value="1"/>
</dbReference>
<dbReference type="Gene3D" id="1.10.472.170">
    <property type="match status" value="1"/>
</dbReference>
<dbReference type="Gene3D" id="1.10.472.10">
    <property type="entry name" value="Cyclin-like"/>
    <property type="match status" value="1"/>
</dbReference>
<dbReference type="HAMAP" id="MF_00383">
    <property type="entry name" value="TF2B_arch"/>
    <property type="match status" value="1"/>
</dbReference>
<dbReference type="InterPro" id="IPR013763">
    <property type="entry name" value="Cyclin-like_dom"/>
</dbReference>
<dbReference type="InterPro" id="IPR036915">
    <property type="entry name" value="Cyclin-like_sf"/>
</dbReference>
<dbReference type="InterPro" id="IPR000812">
    <property type="entry name" value="TFIIB"/>
</dbReference>
<dbReference type="InterPro" id="IPR023484">
    <property type="entry name" value="TFIIB_arc"/>
</dbReference>
<dbReference type="InterPro" id="IPR023486">
    <property type="entry name" value="TFIIB_CS"/>
</dbReference>
<dbReference type="InterPro" id="IPR013150">
    <property type="entry name" value="TFIIB_cyclin"/>
</dbReference>
<dbReference type="InterPro" id="IPR013137">
    <property type="entry name" value="Znf_TFIIB"/>
</dbReference>
<dbReference type="NCBIfam" id="NF001658">
    <property type="entry name" value="PRK00423.1"/>
    <property type="match status" value="1"/>
</dbReference>
<dbReference type="PANTHER" id="PTHR11618:SF13">
    <property type="entry name" value="TRANSCRIPTION INITIATION FACTOR IIB"/>
    <property type="match status" value="1"/>
</dbReference>
<dbReference type="PANTHER" id="PTHR11618">
    <property type="entry name" value="TRANSCRIPTION INITIATION FACTOR IIB-RELATED"/>
    <property type="match status" value="1"/>
</dbReference>
<dbReference type="Pfam" id="PF00382">
    <property type="entry name" value="TFIIB"/>
    <property type="match status" value="2"/>
</dbReference>
<dbReference type="Pfam" id="PF08271">
    <property type="entry name" value="Zn_Ribbon_TF"/>
    <property type="match status" value="1"/>
</dbReference>
<dbReference type="PRINTS" id="PR00685">
    <property type="entry name" value="TIFACTORIIB"/>
</dbReference>
<dbReference type="SMART" id="SM00385">
    <property type="entry name" value="CYCLIN"/>
    <property type="match status" value="2"/>
</dbReference>
<dbReference type="SUPFAM" id="SSF47954">
    <property type="entry name" value="Cyclin-like"/>
    <property type="match status" value="2"/>
</dbReference>
<dbReference type="SUPFAM" id="SSF57783">
    <property type="entry name" value="Zinc beta-ribbon"/>
    <property type="match status" value="1"/>
</dbReference>
<dbReference type="PROSITE" id="PS00782">
    <property type="entry name" value="TFIIB"/>
    <property type="match status" value="2"/>
</dbReference>
<dbReference type="PROSITE" id="PS51134">
    <property type="entry name" value="ZF_TFIIB"/>
    <property type="match status" value="1"/>
</dbReference>
<name>TF2B_PYRWO</name>
<proteinExistence type="evidence at protein level"/>